<evidence type="ECO:0000250" key="1">
    <source>
        <dbReference type="UniProtKB" id="Q8R3P9"/>
    </source>
</evidence>
<evidence type="ECO:0000250" key="2">
    <source>
        <dbReference type="UniProtKB" id="Q9BQI6"/>
    </source>
</evidence>
<evidence type="ECO:0000256" key="3">
    <source>
        <dbReference type="SAM" id="MobiDB-lite"/>
    </source>
</evidence>
<evidence type="ECO:0000305" key="4"/>
<proteinExistence type="evidence at transcript level"/>
<comment type="function">
    <text evidence="2">Plays a role in the DNA damage response (DDR) pathway by regulating postreplication repair of UV-damaged DNA and genomic stability maintenance. The SLF1-SLF2 complex acts to link RAD18 with the SMC5-SMC6 complex at replication-coupled interstrand cross-links (ICL) and DNA double-strand breaks (DSBs) sites on chromatin during DNA repair in response to stalled replication forks. Promotes the recruitment of SLF2 and the SMC5-SMC6 complex to DNA lesions.</text>
</comment>
<comment type="subunit">
    <text evidence="1 2">Interacts (via N-terminus) with SLF2; this interaction links RAD18 to the SMC5-SMC6 complex. Interacts (via BRCT domains) with RAD18; this interaction occurs in a SLF2-independent manner. Interacts with SMC6. Interacts (via BRCT domains) with RAD18 (via C-terminus and phosphorylated form); this interaction is required for efficient repair of UV-induced DNA damage.</text>
</comment>
<comment type="subcellular location">
    <subcellularLocation>
        <location evidence="2">Nucleus</location>
    </subcellularLocation>
    <subcellularLocation>
        <location evidence="1">Cytoplasm</location>
    </subcellularLocation>
    <subcellularLocation>
        <location evidence="1">Cytoplasm</location>
        <location evidence="1">Cytoskeleton</location>
        <location evidence="1">Microtubule organizing center</location>
        <location evidence="1">Centrosome</location>
    </subcellularLocation>
    <text evidence="1 2">Relocalizes with RAD18 to nuclear foci in response to DNA damage. Colocalizes with RAD18 in the nucleus and to centrosomes. Associates with chromatin. Accumulates with RAD18 and the SMC5-SMC6 complex at replication-coupled DNA interstrand repair and DNA double-strand breaks (DSBs) sites on chromatin in a ubiquitin-dependent manner.</text>
</comment>
<comment type="domain">
    <text evidence="1">BRCT domains are necessary for its targeting to ionizing radiation-induced nuclear foci.</text>
</comment>
<comment type="sequence caution" evidence="4">
    <conflict type="erroneous initiation">
        <sequence resource="EMBL-CDS" id="AAI50080"/>
    </conflict>
</comment>
<feature type="chain" id="PRO_0000342340" description="SMC5-SMC6 complex localization factor protein 1">
    <location>
        <begin position="1"/>
        <end position="1055"/>
    </location>
</feature>
<feature type="domain" description="BRCT 1">
    <location>
        <begin position="2"/>
        <end position="80"/>
    </location>
</feature>
<feature type="domain" description="BRCT 2">
    <location>
        <begin position="121"/>
        <end position="199"/>
    </location>
</feature>
<feature type="repeat" description="ANK 1">
    <location>
        <begin position="804"/>
        <end position="834"/>
    </location>
</feature>
<feature type="repeat" description="ANK 2">
    <location>
        <begin position="838"/>
        <end position="867"/>
    </location>
</feature>
<feature type="repeat" description="ANK 3">
    <location>
        <begin position="872"/>
        <end position="901"/>
    </location>
</feature>
<feature type="region of interest" description="Disordered" evidence="3">
    <location>
        <begin position="312"/>
        <end position="332"/>
    </location>
</feature>
<feature type="region of interest" description="NSE5-like domain; mediates interaction with SLF2" evidence="2">
    <location>
        <begin position="407"/>
        <end position="1055"/>
    </location>
</feature>
<feature type="compositionally biased region" description="Basic and acidic residues" evidence="3">
    <location>
        <begin position="318"/>
        <end position="332"/>
    </location>
</feature>
<feature type="cross-link" description="Glycyl lysine isopeptide (Lys-Gly) (interchain with G-Cter in SUMO2)" evidence="2">
    <location>
        <position position="929"/>
    </location>
</feature>
<organism>
    <name type="scientific">Bos taurus</name>
    <name type="common">Bovine</name>
    <dbReference type="NCBI Taxonomy" id="9913"/>
    <lineage>
        <taxon>Eukaryota</taxon>
        <taxon>Metazoa</taxon>
        <taxon>Chordata</taxon>
        <taxon>Craniata</taxon>
        <taxon>Vertebrata</taxon>
        <taxon>Euteleostomi</taxon>
        <taxon>Mammalia</taxon>
        <taxon>Eutheria</taxon>
        <taxon>Laurasiatheria</taxon>
        <taxon>Artiodactyla</taxon>
        <taxon>Ruminantia</taxon>
        <taxon>Pecora</taxon>
        <taxon>Bovidae</taxon>
        <taxon>Bovinae</taxon>
        <taxon>Bos</taxon>
    </lineage>
</organism>
<dbReference type="EMBL" id="BC150079">
    <property type="protein sequence ID" value="AAI50080.1"/>
    <property type="status" value="ALT_INIT"/>
    <property type="molecule type" value="mRNA"/>
</dbReference>
<dbReference type="RefSeq" id="NP_001095528.2">
    <property type="nucleotide sequence ID" value="NM_001102058.2"/>
</dbReference>
<dbReference type="SMR" id="A6QR20"/>
<dbReference type="FunCoup" id="A6QR20">
    <property type="interactions" value="1059"/>
</dbReference>
<dbReference type="STRING" id="9913.ENSBTAP00000008026"/>
<dbReference type="PaxDb" id="9913-ENSBTAP00000008026"/>
<dbReference type="GeneID" id="520250"/>
<dbReference type="KEGG" id="bta:520250"/>
<dbReference type="CTD" id="84250"/>
<dbReference type="VEuPathDB" id="HostDB:ENSBTAG00000006107"/>
<dbReference type="eggNOG" id="KOG0504">
    <property type="taxonomic scope" value="Eukaryota"/>
</dbReference>
<dbReference type="eggNOG" id="KOG1929">
    <property type="taxonomic scope" value="Eukaryota"/>
</dbReference>
<dbReference type="InParanoid" id="A6QR20"/>
<dbReference type="OMA" id="YIGHYLF"/>
<dbReference type="OrthoDB" id="273147at2759"/>
<dbReference type="Proteomes" id="UP000009136">
    <property type="component" value="Chromosome 7"/>
</dbReference>
<dbReference type="Bgee" id="ENSBTAG00000006107">
    <property type="expression patterns" value="Expressed in semen and 107 other cell types or tissues"/>
</dbReference>
<dbReference type="GO" id="GO:0005813">
    <property type="term" value="C:centrosome"/>
    <property type="evidence" value="ECO:0007669"/>
    <property type="project" value="UniProtKB-SubCell"/>
</dbReference>
<dbReference type="GO" id="GO:0005737">
    <property type="term" value="C:cytoplasm"/>
    <property type="evidence" value="ECO:0007669"/>
    <property type="project" value="UniProtKB-SubCell"/>
</dbReference>
<dbReference type="GO" id="GO:0005634">
    <property type="term" value="C:nucleus"/>
    <property type="evidence" value="ECO:0000318"/>
    <property type="project" value="GO_Central"/>
</dbReference>
<dbReference type="GO" id="GO:0035861">
    <property type="term" value="C:site of double-strand break"/>
    <property type="evidence" value="ECO:0000250"/>
    <property type="project" value="UniProtKB"/>
</dbReference>
<dbReference type="GO" id="GO:0006974">
    <property type="term" value="P:DNA damage response"/>
    <property type="evidence" value="ECO:0000250"/>
    <property type="project" value="UniProtKB"/>
</dbReference>
<dbReference type="GO" id="GO:0006281">
    <property type="term" value="P:DNA repair"/>
    <property type="evidence" value="ECO:0007669"/>
    <property type="project" value="UniProtKB-KW"/>
</dbReference>
<dbReference type="GO" id="GO:2000781">
    <property type="term" value="P:positive regulation of double-strand break repair"/>
    <property type="evidence" value="ECO:0000250"/>
    <property type="project" value="UniProtKB"/>
</dbReference>
<dbReference type="GO" id="GO:0034184">
    <property type="term" value="P:positive regulation of maintenance of mitotic sister chromatid cohesion"/>
    <property type="evidence" value="ECO:0000250"/>
    <property type="project" value="UniProtKB"/>
</dbReference>
<dbReference type="GO" id="GO:0031334">
    <property type="term" value="P:positive regulation of protein-containing complex assembly"/>
    <property type="evidence" value="ECO:0000250"/>
    <property type="project" value="UniProtKB"/>
</dbReference>
<dbReference type="GO" id="GO:1990166">
    <property type="term" value="P:protein localization to site of double-strand break"/>
    <property type="evidence" value="ECO:0000250"/>
    <property type="project" value="UniProtKB"/>
</dbReference>
<dbReference type="CDD" id="cd17750">
    <property type="entry name" value="BRCT_SLF1"/>
    <property type="match status" value="1"/>
</dbReference>
<dbReference type="FunFam" id="1.25.40.20:FF:000121">
    <property type="entry name" value="SMC5-SMC6 complex localization factor protein 1"/>
    <property type="match status" value="1"/>
</dbReference>
<dbReference type="FunFam" id="3.40.50.10190:FF:000034">
    <property type="entry name" value="SMC5-SMC6 complex localization factor protein 1"/>
    <property type="match status" value="1"/>
</dbReference>
<dbReference type="Gene3D" id="1.25.40.20">
    <property type="entry name" value="Ankyrin repeat-containing domain"/>
    <property type="match status" value="1"/>
</dbReference>
<dbReference type="Gene3D" id="3.40.50.10190">
    <property type="entry name" value="BRCT domain"/>
    <property type="match status" value="2"/>
</dbReference>
<dbReference type="InterPro" id="IPR002110">
    <property type="entry name" value="Ankyrin_rpt"/>
</dbReference>
<dbReference type="InterPro" id="IPR036770">
    <property type="entry name" value="Ankyrin_rpt-contain_sf"/>
</dbReference>
<dbReference type="InterPro" id="IPR001357">
    <property type="entry name" value="BRCT_dom"/>
</dbReference>
<dbReference type="InterPro" id="IPR036420">
    <property type="entry name" value="BRCT_dom_sf"/>
</dbReference>
<dbReference type="InterPro" id="IPR049935">
    <property type="entry name" value="BRCT_SLF1"/>
</dbReference>
<dbReference type="InterPro" id="IPR042479">
    <property type="entry name" value="Slf1"/>
</dbReference>
<dbReference type="PANTHER" id="PTHR46677">
    <property type="entry name" value="SMC5-SMC6 COMPLEX LOCALIZATION FACTOR PROTEIN 1"/>
    <property type="match status" value="1"/>
</dbReference>
<dbReference type="PANTHER" id="PTHR46677:SF1">
    <property type="entry name" value="SMC5-SMC6 COMPLEX LOCALIZATION FACTOR PROTEIN 1"/>
    <property type="match status" value="1"/>
</dbReference>
<dbReference type="Pfam" id="PF12796">
    <property type="entry name" value="Ank_2"/>
    <property type="match status" value="1"/>
</dbReference>
<dbReference type="Pfam" id="PF23294">
    <property type="entry name" value="BRCT_TopB1_SLF1"/>
    <property type="match status" value="1"/>
</dbReference>
<dbReference type="Pfam" id="PF16770">
    <property type="entry name" value="RTT107_BRCT_5"/>
    <property type="match status" value="1"/>
</dbReference>
<dbReference type="SMART" id="SM00248">
    <property type="entry name" value="ANK"/>
    <property type="match status" value="3"/>
</dbReference>
<dbReference type="SMART" id="SM00292">
    <property type="entry name" value="BRCT"/>
    <property type="match status" value="2"/>
</dbReference>
<dbReference type="SUPFAM" id="SSF48403">
    <property type="entry name" value="Ankyrin repeat"/>
    <property type="match status" value="1"/>
</dbReference>
<dbReference type="SUPFAM" id="SSF52113">
    <property type="entry name" value="BRCT domain"/>
    <property type="match status" value="1"/>
</dbReference>
<dbReference type="PROSITE" id="PS50297">
    <property type="entry name" value="ANK_REP_REGION"/>
    <property type="match status" value="1"/>
</dbReference>
<dbReference type="PROSITE" id="PS50088">
    <property type="entry name" value="ANK_REPEAT"/>
    <property type="match status" value="3"/>
</dbReference>
<sequence length="1055" mass="121017">MEDDAPKHIIQMTGFKVEEKEALGKLLLKLDCTFIKSEKYKNCTHLIAERLCKSEKFLAACAAGKWVLTKDYIIHSAQSGRWLDETTYEWGYKIEKDSHYSPQMQSAPKRWREELKRTGAPGAFHKWKVVLLVRADKRSDSLVRVLEAGKANVILPKNSPTGITHVIASNARIKAEQEKDDFKAPFYPIQYLEDFLLEKEIHNDEDSQTNSTWKNHSSQEKSNDFRENMGFLEMKGTLKETMCRTQKEMKNHDEDVTISSILTEHQSKERFRDSRKNLKFVKMRNALGRHTYRNQEMKKKDEDIQSIYTLRKKRKKEKERDSRKDIEHDRSTLRKHIYRDQKERKNSVFAGHAKESKTKDIRTNVDIVDLKNALRKHIYRAQAVRYRGIRIDKQPAYNVEVKNAEFPRGILNLIESLIEGQFFKEAIEELSSLQAHYIPPVYLLHALLENILQDNIDTFSGRYFHILSALLHLHPPWKSPAMSTYYLELFQCPTCMKGTWSLIEVLIRSCLFNESFCHQISENIIGSKVLHLTLLKFFFNLIESEVRHLSQKLYDWSDSQSLKITGKAVLLEIFWSGNETSGLLTKPVNMLLEWTIYSHKEKCKSNDVFRHELAYLLTGILGAAIDYWIVLGLNMGRNVMRHMSDDVGSYVSLSCDDFSSQDLEIFISSFSSSWLQMFVAEAVFKKLCLQNSISISSEPLSLQKMVYSYLPALGKTGVRGTRKMQKPKKIGLRPCFESQRALIMLNGAKQKQGEGLPEIPELNLAKCSSSLKRLKKKSEGELSCSKENCPSLVTKINFHKTNLKGETALHRACINNQVDRLILLLSMPGIDINVKDNAGWTPLHEACNYGNTVCVQEILQRCPEVDLLTQVDGVTPLHDALSNGHVEIGKLLLQHGGPVLLQQRNSKGELPLDYVVSSQIKEELFAITKIEDTVENFHAQAEKHFYHQQLEFGSFLLSRMLLNFCSIFGLSSESLAFKGLTHLSELLIACQNYKETTSVHTDWLLDLYARNIMTLQKLPNALKELPENVKVCPGVHTEALLVTLEVMCRSVTEIS</sequence>
<gene>
    <name evidence="2" type="primary">SLF1</name>
    <name type="synonym">ANKRD32</name>
    <name type="synonym">BRCTD1</name>
</gene>
<protein>
    <recommendedName>
        <fullName evidence="2">SMC5-SMC6 complex localization factor protein 1</fullName>
    </recommendedName>
    <alternativeName>
        <fullName>Ankyrin repeat domain-containing protein 32</fullName>
    </alternativeName>
    <alternativeName>
        <fullName>BRCT domain-containing protein 1</fullName>
    </alternativeName>
</protein>
<reference key="1">
    <citation type="submission" date="2007-07" db="EMBL/GenBank/DDBJ databases">
        <authorList>
            <consortium name="NIH - Mammalian Gene Collection (MGC) project"/>
        </authorList>
    </citation>
    <scope>NUCLEOTIDE SEQUENCE [LARGE SCALE MRNA]</scope>
    <source>
        <strain>Hereford</strain>
        <tissue>Thalamus</tissue>
    </source>
</reference>
<accession>A6QR20</accession>
<keyword id="KW-0040">ANK repeat</keyword>
<keyword id="KW-0963">Cytoplasm</keyword>
<keyword id="KW-0206">Cytoskeleton</keyword>
<keyword id="KW-0227">DNA damage</keyword>
<keyword id="KW-0234">DNA repair</keyword>
<keyword id="KW-1017">Isopeptide bond</keyword>
<keyword id="KW-0539">Nucleus</keyword>
<keyword id="KW-1185">Reference proteome</keyword>
<keyword id="KW-0677">Repeat</keyword>
<keyword id="KW-0832">Ubl conjugation</keyword>
<name>SLF1_BOVIN</name>